<name>GUAA_PLAF7</name>
<dbReference type="EC" id="6.3.5.2" evidence="4 5 6 7"/>
<dbReference type="EMBL" id="AF152349">
    <property type="protein sequence ID" value="AAF09184.1"/>
    <property type="status" value="ALT_FRAME"/>
    <property type="molecule type" value="mRNA"/>
</dbReference>
<dbReference type="EMBL" id="LN999944">
    <property type="protein sequence ID" value="CZT98376.1"/>
    <property type="molecule type" value="Genomic_DNA"/>
</dbReference>
<dbReference type="RefSeq" id="XP_001347408.1">
    <property type="nucleotide sequence ID" value="XM_001347372.1"/>
</dbReference>
<dbReference type="PDB" id="3UOW">
    <property type="method" value="X-ray"/>
    <property type="resolution" value="2.72 A"/>
    <property type="chains" value="A/B=1-555"/>
</dbReference>
<dbReference type="PDB" id="4WIM">
    <property type="method" value="X-ray"/>
    <property type="resolution" value="3.60 A"/>
    <property type="chains" value="A/B=2-555"/>
</dbReference>
<dbReference type="PDB" id="4WIN">
    <property type="method" value="X-ray"/>
    <property type="resolution" value="2.60 A"/>
    <property type="chains" value="A/B=2-237"/>
</dbReference>
<dbReference type="PDB" id="4WIO">
    <property type="method" value="X-ray"/>
    <property type="resolution" value="3.15 A"/>
    <property type="chains" value="A=2-555"/>
</dbReference>
<dbReference type="PDB" id="7ZU9">
    <property type="method" value="X-ray"/>
    <property type="resolution" value="2.80 A"/>
    <property type="chains" value="A=2-555"/>
</dbReference>
<dbReference type="PDBsum" id="3UOW"/>
<dbReference type="PDBsum" id="4WIM"/>
<dbReference type="PDBsum" id="4WIN"/>
<dbReference type="PDBsum" id="4WIO"/>
<dbReference type="PDBsum" id="7ZU9"/>
<dbReference type="SMR" id="Q8IJR9"/>
<dbReference type="FunCoup" id="Q8IJR9">
    <property type="interactions" value="642"/>
</dbReference>
<dbReference type="STRING" id="36329.Q8IJR9"/>
<dbReference type="ChEMBL" id="CHEMBL4523484"/>
<dbReference type="MEROPS" id="C26.A34"/>
<dbReference type="SwissPalm" id="Q8IJR9"/>
<dbReference type="PaxDb" id="5833-PF10_0123"/>
<dbReference type="PRIDE" id="Q8IJR9"/>
<dbReference type="EnsemblProtists" id="CZT98376">
    <property type="protein sequence ID" value="CZT98376"/>
    <property type="gene ID" value="PF3D7_1012600"/>
</dbReference>
<dbReference type="GeneID" id="810281"/>
<dbReference type="KEGG" id="pfa:PF3D7_1012600"/>
<dbReference type="VEuPathDB" id="PlasmoDB:PF3D7_1012600"/>
<dbReference type="VEuPathDB" id="PlasmoDB:Pf7G8-2_000298200"/>
<dbReference type="VEuPathDB" id="PlasmoDB:Pf7G8_100017000"/>
<dbReference type="VEuPathDB" id="PlasmoDB:PfCD01_100017800"/>
<dbReference type="VEuPathDB" id="PlasmoDB:PfDd2_100018000"/>
<dbReference type="VEuPathDB" id="PlasmoDB:PfGA01_100017900"/>
<dbReference type="VEuPathDB" id="PlasmoDB:PfGB4_100017600"/>
<dbReference type="VEuPathDB" id="PlasmoDB:PfGN01_100018200"/>
<dbReference type="VEuPathDB" id="PlasmoDB:PfHB3_100017000"/>
<dbReference type="VEuPathDB" id="PlasmoDB:PfIT_100016600"/>
<dbReference type="VEuPathDB" id="PlasmoDB:PfKE01_100017900"/>
<dbReference type="VEuPathDB" id="PlasmoDB:PfKH01_100017200"/>
<dbReference type="VEuPathDB" id="PlasmoDB:PfKH02_100018100"/>
<dbReference type="VEuPathDB" id="PlasmoDB:PfML01_100016900"/>
<dbReference type="VEuPathDB" id="PlasmoDB:PfNF135_100018000"/>
<dbReference type="VEuPathDB" id="PlasmoDB:PfNF166_100017500"/>
<dbReference type="VEuPathDB" id="PlasmoDB:PfNF54_100017800"/>
<dbReference type="VEuPathDB" id="PlasmoDB:PfSD01_100017300"/>
<dbReference type="VEuPathDB" id="PlasmoDB:PfSN01_100018000"/>
<dbReference type="VEuPathDB" id="PlasmoDB:PfTG01_100017800"/>
<dbReference type="HOGENOM" id="CLU_014340_0_5_1"/>
<dbReference type="InParanoid" id="Q8IJR9"/>
<dbReference type="OMA" id="IWQSFAV"/>
<dbReference type="OrthoDB" id="1724632at2759"/>
<dbReference type="PhylomeDB" id="Q8IJR9"/>
<dbReference type="BRENDA" id="6.3.5.2">
    <property type="organism ID" value="4889"/>
</dbReference>
<dbReference type="Reactome" id="R-PFA-73817">
    <property type="pathway name" value="Purine ribonucleoside monophosphate biosynthesis"/>
</dbReference>
<dbReference type="Reactome" id="R-PFA-9748787">
    <property type="pathway name" value="Azathioprine ADME"/>
</dbReference>
<dbReference type="UniPathway" id="UPA00189">
    <property type="reaction ID" value="UER00296"/>
</dbReference>
<dbReference type="EvolutionaryTrace" id="Q8IJR9"/>
<dbReference type="Proteomes" id="UP000001450">
    <property type="component" value="Chromosome 10"/>
</dbReference>
<dbReference type="GO" id="GO:0005829">
    <property type="term" value="C:cytosol"/>
    <property type="evidence" value="ECO:0000318"/>
    <property type="project" value="GO_Central"/>
</dbReference>
<dbReference type="GO" id="GO:0005524">
    <property type="term" value="F:ATP binding"/>
    <property type="evidence" value="ECO:0007669"/>
    <property type="project" value="UniProtKB-KW"/>
</dbReference>
<dbReference type="GO" id="GO:0003922">
    <property type="term" value="F:GMP synthase (glutamine-hydrolyzing) activity"/>
    <property type="evidence" value="ECO:0000314"/>
    <property type="project" value="UniProtKB"/>
</dbReference>
<dbReference type="GO" id="GO:0003921">
    <property type="term" value="F:GMP synthase activity"/>
    <property type="evidence" value="ECO:0000250"/>
    <property type="project" value="GeneDB"/>
</dbReference>
<dbReference type="GO" id="GO:0000287">
    <property type="term" value="F:magnesium ion binding"/>
    <property type="evidence" value="ECO:0000314"/>
    <property type="project" value="UniProtKB"/>
</dbReference>
<dbReference type="GO" id="GO:0006177">
    <property type="term" value="P:GMP biosynthetic process"/>
    <property type="evidence" value="ECO:0000314"/>
    <property type="project" value="UniProtKB"/>
</dbReference>
<dbReference type="GO" id="GO:0006164">
    <property type="term" value="P:purine nucleotide biosynthetic process"/>
    <property type="evidence" value="ECO:0000250"/>
    <property type="project" value="GeneDB"/>
</dbReference>
<dbReference type="CDD" id="cd01742">
    <property type="entry name" value="GATase1_GMP_Synthase"/>
    <property type="match status" value="1"/>
</dbReference>
<dbReference type="CDD" id="cd01997">
    <property type="entry name" value="GMP_synthase_C"/>
    <property type="match status" value="1"/>
</dbReference>
<dbReference type="FunFam" id="3.40.50.620:FF:000198">
    <property type="entry name" value="GMP synthase (Glutamine-hydrolyzing) domain-containing protein"/>
    <property type="match status" value="1"/>
</dbReference>
<dbReference type="FunFam" id="3.30.300.10:FF:000002">
    <property type="entry name" value="GMP synthase [glutamine-hydrolyzing]"/>
    <property type="match status" value="1"/>
</dbReference>
<dbReference type="FunFam" id="3.40.50.880:FF:000058">
    <property type="entry name" value="GMP synthase [glutamine-hydrolyzing]"/>
    <property type="match status" value="1"/>
</dbReference>
<dbReference type="Gene3D" id="3.30.300.10">
    <property type="match status" value="1"/>
</dbReference>
<dbReference type="Gene3D" id="3.40.50.880">
    <property type="match status" value="1"/>
</dbReference>
<dbReference type="Gene3D" id="3.40.50.620">
    <property type="entry name" value="HUPs"/>
    <property type="match status" value="1"/>
</dbReference>
<dbReference type="HAMAP" id="MF_00344">
    <property type="entry name" value="GMP_synthase"/>
    <property type="match status" value="1"/>
</dbReference>
<dbReference type="InterPro" id="IPR029062">
    <property type="entry name" value="Class_I_gatase-like"/>
</dbReference>
<dbReference type="InterPro" id="IPR017926">
    <property type="entry name" value="GATASE"/>
</dbReference>
<dbReference type="InterPro" id="IPR001674">
    <property type="entry name" value="GMP_synth_C"/>
</dbReference>
<dbReference type="InterPro" id="IPR004739">
    <property type="entry name" value="GMP_synth_GATase"/>
</dbReference>
<dbReference type="InterPro" id="IPR022955">
    <property type="entry name" value="GMP_synthase"/>
</dbReference>
<dbReference type="InterPro" id="IPR025777">
    <property type="entry name" value="GMPS_ATP_PPase_dom"/>
</dbReference>
<dbReference type="InterPro" id="IPR022310">
    <property type="entry name" value="NAD/GMP_synthase"/>
</dbReference>
<dbReference type="InterPro" id="IPR014729">
    <property type="entry name" value="Rossmann-like_a/b/a_fold"/>
</dbReference>
<dbReference type="NCBIfam" id="TIGR00884">
    <property type="entry name" value="guaA_Cterm"/>
    <property type="match status" value="1"/>
</dbReference>
<dbReference type="NCBIfam" id="TIGR00888">
    <property type="entry name" value="guaA_Nterm"/>
    <property type="match status" value="1"/>
</dbReference>
<dbReference type="NCBIfam" id="NF000848">
    <property type="entry name" value="PRK00074.1"/>
    <property type="match status" value="1"/>
</dbReference>
<dbReference type="PANTHER" id="PTHR11922:SF2">
    <property type="entry name" value="GMP SYNTHASE [GLUTAMINE-HYDROLYZING]"/>
    <property type="match status" value="1"/>
</dbReference>
<dbReference type="PANTHER" id="PTHR11922">
    <property type="entry name" value="GMP SYNTHASE-RELATED"/>
    <property type="match status" value="1"/>
</dbReference>
<dbReference type="Pfam" id="PF00117">
    <property type="entry name" value="GATase"/>
    <property type="match status" value="1"/>
</dbReference>
<dbReference type="Pfam" id="PF00958">
    <property type="entry name" value="GMP_synt_C"/>
    <property type="match status" value="1"/>
</dbReference>
<dbReference type="Pfam" id="PF02540">
    <property type="entry name" value="NAD_synthase"/>
    <property type="match status" value="1"/>
</dbReference>
<dbReference type="SUPFAM" id="SSF52402">
    <property type="entry name" value="Adenine nucleotide alpha hydrolases-like"/>
    <property type="match status" value="1"/>
</dbReference>
<dbReference type="SUPFAM" id="SSF52317">
    <property type="entry name" value="Class I glutamine amidotransferase-like"/>
    <property type="match status" value="1"/>
</dbReference>
<dbReference type="SUPFAM" id="SSF54810">
    <property type="entry name" value="GMP synthetase C-terminal dimerisation domain"/>
    <property type="match status" value="1"/>
</dbReference>
<dbReference type="PROSITE" id="PS51273">
    <property type="entry name" value="GATASE_TYPE_1"/>
    <property type="match status" value="1"/>
</dbReference>
<dbReference type="PROSITE" id="PS51553">
    <property type="entry name" value="GMPS_ATP_PPASE"/>
    <property type="match status" value="1"/>
</dbReference>
<accession>Q8IJR9</accession>
<accession>Q9U775</accession>
<evidence type="ECO:0000255" key="1">
    <source>
        <dbReference type="PROSITE-ProRule" id="PRU00605"/>
    </source>
</evidence>
<evidence type="ECO:0000255" key="2">
    <source>
        <dbReference type="PROSITE-ProRule" id="PRU00886"/>
    </source>
</evidence>
<evidence type="ECO:0000269" key="3">
    <source>
    </source>
</evidence>
<evidence type="ECO:0000269" key="4">
    <source>
    </source>
</evidence>
<evidence type="ECO:0000269" key="5">
    <source>
    </source>
</evidence>
<evidence type="ECO:0000269" key="6">
    <source>
    </source>
</evidence>
<evidence type="ECO:0000269" key="7">
    <source>
    </source>
</evidence>
<evidence type="ECO:0000269" key="8">
    <source>
    </source>
</evidence>
<evidence type="ECO:0000269" key="9">
    <source ref="6"/>
</evidence>
<evidence type="ECO:0000303" key="10">
    <source>
    </source>
</evidence>
<evidence type="ECO:0000303" key="11">
    <source>
    </source>
</evidence>
<evidence type="ECO:0000303" key="12">
    <source>
    </source>
</evidence>
<evidence type="ECO:0000305" key="13"/>
<evidence type="ECO:0000305" key="14">
    <source>
    </source>
</evidence>
<evidence type="ECO:0000305" key="15">
    <source>
    </source>
</evidence>
<evidence type="ECO:0000305" key="16">
    <source>
    </source>
</evidence>
<evidence type="ECO:0000305" key="17">
    <source>
    </source>
</evidence>
<evidence type="ECO:0000312" key="18">
    <source>
        <dbReference type="EMBL" id="AAF09184.1"/>
    </source>
</evidence>
<evidence type="ECO:0000312" key="19">
    <source>
        <dbReference type="EMBL" id="CZT98376.1"/>
    </source>
</evidence>
<evidence type="ECO:0000312" key="20">
    <source>
        <dbReference type="Proteomes" id="UP000001450"/>
    </source>
</evidence>
<evidence type="ECO:0007744" key="21">
    <source>
        <dbReference type="PDB" id="3UOW"/>
    </source>
</evidence>
<evidence type="ECO:0007744" key="22">
    <source>
        <dbReference type="PDB" id="4WIM"/>
    </source>
</evidence>
<evidence type="ECO:0007744" key="23">
    <source>
        <dbReference type="PDB" id="4WIN"/>
    </source>
</evidence>
<evidence type="ECO:0007744" key="24">
    <source>
        <dbReference type="PDB" id="4WIO"/>
    </source>
</evidence>
<evidence type="ECO:0007744" key="25">
    <source>
        <dbReference type="PDB" id="7ZU9"/>
    </source>
</evidence>
<evidence type="ECO:0007829" key="26">
    <source>
        <dbReference type="PDB" id="3UOW"/>
    </source>
</evidence>
<evidence type="ECO:0007829" key="27">
    <source>
        <dbReference type="PDB" id="4WIN"/>
    </source>
</evidence>
<evidence type="ECO:0007829" key="28">
    <source>
        <dbReference type="PDB" id="7ZU9"/>
    </source>
</evidence>
<sequence>MEGEEYDKILVLNFGSQYFHLIVKRLNNIKIFSETKDYGVELKDIKDMNIKGVILSGGPYSVTEAGSPHLKKEVFEYFLEKKIPIFGICYGMQEIAVQMNGEVKKSKTSEYGCTDVNILRNDNINNITYCRNFGDSSSAMDLYSNYKLMNETCCLFENIKSDITTVWMNHNDEVTKIPENFYLVSSSENCLICSIYNKEYNIYGVQYHPEVYESLDGELMFYNFAYNICKCKKQFDPIRYHELELKNIEKYKHDHYVIAAMSGGIDSTVAAAYTHKIFKERFFGIFIDNGLLRKNEAENVYTFLKSTFPDMNITKIDASENFLSNLQGVTDPEQKRKIIGKLFIEEFEKAVNNIDIDINKTFLLQGTLYPDIIESKCSKNLSDTIKTHHNVGGLPKNLKFKLFEPFKYLFKDDVKTLSRELNLPEEITNRHPFPGPGLAIRVIGEINKHKLNILREVDDIFINDLKQYGLYNQISQAFAVLLSSKSVGVRGDARSYDYVCVLRAVKTSSFMTANWYQIPYDILDKITTRILSEVKGVNRILYDVSSKPPATIEFE</sequence>
<reference evidence="18" key="1">
    <citation type="journal article" date="2000" name="Exp. Parasitol.">
        <title>Plasmodium falciparum: isolation and characterisation of a gene encoding protozoan GMP synthase.</title>
        <authorList>
            <person name="McConkey G.A."/>
        </authorList>
    </citation>
    <scope>NUCLEOTIDE SEQUENCE [MRNA]</scope>
    <scope>DEVELOPMENTAL STAGE</scope>
    <source>
        <strain evidence="18">3D7</strain>
    </source>
</reference>
<reference evidence="20" key="2">
    <citation type="journal article" date="2002" name="Nature">
        <title>Genome sequence of the human malaria parasite Plasmodium falciparum.</title>
        <authorList>
            <person name="Gardner M.J."/>
            <person name="Hall N."/>
            <person name="Fung E."/>
            <person name="White O."/>
            <person name="Berriman M."/>
            <person name="Hyman R.W."/>
            <person name="Carlton J.M."/>
            <person name="Pain A."/>
            <person name="Nelson K.E."/>
            <person name="Bowman S."/>
            <person name="Paulsen I.T."/>
            <person name="James K.D."/>
            <person name="Eisen J.A."/>
            <person name="Rutherford K.M."/>
            <person name="Salzberg S.L."/>
            <person name="Craig A."/>
            <person name="Kyes S."/>
            <person name="Chan M.-S."/>
            <person name="Nene V."/>
            <person name="Shallom S.J."/>
            <person name="Suh B."/>
            <person name="Peterson J."/>
            <person name="Angiuoli S."/>
            <person name="Pertea M."/>
            <person name="Allen J."/>
            <person name="Selengut J."/>
            <person name="Haft D."/>
            <person name="Mather M.W."/>
            <person name="Vaidya A.B."/>
            <person name="Martin D.M.A."/>
            <person name="Fairlamb A.H."/>
            <person name="Fraunholz M.J."/>
            <person name="Roos D.S."/>
            <person name="Ralph S.A."/>
            <person name="McFadden G.I."/>
            <person name="Cummings L.M."/>
            <person name="Subramanian G.M."/>
            <person name="Mungall C."/>
            <person name="Venter J.C."/>
            <person name="Carucci D.J."/>
            <person name="Hoffman S.L."/>
            <person name="Newbold C."/>
            <person name="Davis R.W."/>
            <person name="Fraser C.M."/>
            <person name="Barrell B.G."/>
        </authorList>
    </citation>
    <scope>NUCLEOTIDE SEQUENCE [LARGE SCALE GENOMIC DNA]</scope>
    <source>
        <strain evidence="20">3D7</strain>
    </source>
</reference>
<reference evidence="13" key="3">
    <citation type="journal article" date="2008" name="Biochem. J.">
        <title>Kinetic and biochemical characterization of Plasmodium falciparum GMP synthetase.</title>
        <authorList>
            <person name="Bhat J.Y."/>
            <person name="Shastri B.G."/>
            <person name="Balaram H."/>
        </authorList>
    </citation>
    <scope>FUNCTION</scope>
    <scope>CATALYTIC ACTIVITY</scope>
    <scope>COFACTOR</scope>
    <scope>ACTIVITY REGULATION</scope>
    <scope>BIOPHYSICOCHEMICAL PROPERTIES</scope>
    <scope>PATHWAY</scope>
    <scope>SUBUNIT</scope>
    <scope>DOMAIN</scope>
</reference>
<reference evidence="13" key="4">
    <citation type="journal article" date="2011" name="Biochemistry">
        <title>Ammonia channeling in Plasmodium falciparum GMP synthetase: investigation by NMR spectroscopy and biochemical assays.</title>
        <authorList>
            <person name="Bhat J.Y."/>
            <person name="Venkatachala R."/>
            <person name="Singh K."/>
            <person name="Gupta K."/>
            <person name="Sarma S.P."/>
            <person name="Balaram H."/>
        </authorList>
    </citation>
    <scope>FUNCTION</scope>
    <scope>CATALYTIC ACTIVITY</scope>
    <scope>BIOPHYSICOCHEMICAL PROPERTIES</scope>
    <scope>PATHWAY</scope>
    <scope>DOMAIN</scope>
    <scope>ACTIVE SITE</scope>
    <scope>MUTAGENESIS OF CYS-89</scope>
</reference>
<reference evidence="13" key="5">
    <citation type="journal article" date="2020" name="ChemBioChem">
        <title>Helices on Interdomain Interface Couple Catalysis in the ATPPase Domain with Allostery in Plasmodium falciparum GMP Synthetase.</title>
        <authorList>
            <person name="Shivakumaraswamy S."/>
            <person name="Pandey N."/>
            <person name="Ballut L."/>
            <person name="Violot S."/>
            <person name="Aghajari N."/>
            <person name="Balaram H."/>
        </authorList>
    </citation>
    <scope>FUNCTION</scope>
    <scope>CATALYTIC ACTIVITY</scope>
    <scope>ACTIVITY REGULATION</scope>
    <scope>BIOPHYSICOCHEMICAL PROPERTIES</scope>
    <scope>PATHWAY</scope>
    <scope>DOMAIN</scope>
    <scope>MUTAGENESIS OF LYS-24; ARG-25; LYS-160; GLU-213; LYS-376; LYS-386; THR-387; HIS-388; HIS-389; ASN-390; LYS-411; ASP-412; ASP-413; LYS-415; ARG-539; LYS-547; GLU-553 AND GLU-555</scope>
</reference>
<reference evidence="21" key="6">
    <citation type="submission" date="2011-11" db="PDB data bank">
        <title>Crystal Structure of PF10_0123, a GMP Synthetase from Plasmodium Falciparum.</title>
        <authorList>
            <person name="Wernimont A.K."/>
            <person name="Dong A."/>
            <person name="Hills T."/>
            <person name="Amani M."/>
            <person name="Perieteanu A."/>
            <person name="Lin Y.H."/>
            <person name="Loppnau P."/>
            <person name="Arrowsmith C.H."/>
            <person name="Edwards A.M."/>
            <person name="Bountra C."/>
            <person name="Weigelt J."/>
            <person name="Hui R."/>
        </authorList>
    </citation>
    <scope>X-RAY CRYSTALLOGRAPHY (2.72 ANGSTROMS) IN COMPLEX WITH XMP</scope>
</reference>
<reference evidence="22 23 24" key="7">
    <citation type="journal article" date="2015" name="Nat. Commun.">
        <title>Active site coupling in Plasmodium falciparum GMP synthetase is triggered by domain rotation.</title>
        <authorList>
            <person name="Ballut L."/>
            <person name="Violot S."/>
            <person name="Shivakumaraswamy S."/>
            <person name="Thota L.P."/>
            <person name="Sathya M."/>
            <person name="Kunala J."/>
            <person name="Dijkstra B.W."/>
            <person name="Terreux R."/>
            <person name="Haser R."/>
            <person name="Balaram H."/>
            <person name="Aghajari N."/>
        </authorList>
    </citation>
    <scope>X-RAY CRYSTALLOGRAPHY (2.60 ANGSTROMS) OF 2-237 OF WILD-TYPE AND MUTANT ALA-89 IN COMPLEX WITH GLUTAMINE</scope>
    <scope>FUNCTION</scope>
    <scope>CATALYTIC ACTIVITY</scope>
    <scope>BIOPHYSICOCHEMICAL PROPERTIES</scope>
    <scope>PATHWAY</scope>
    <scope>SUBUNIT</scope>
    <scope>DOMAIN</scope>
    <scope>ACTIVE SITE</scope>
    <scope>MUTAGENESIS OF TYR-18; HIS-20; CYS-89; CYS-113; TRP-167; ASN-169; ASP-172; TYR-212; ASP-371 AND GLU-374</scope>
</reference>
<reference evidence="25" key="8">
    <citation type="journal article" date="2022" name="Biomolecules">
        <title>Tertiary and Quaternary Structure Organization in GMP Synthetases: Implications for Catalysis.</title>
        <authorList>
            <person name="Ballut L."/>
            <person name="Violot S."/>
            <person name="Galisson F."/>
            <person name="Goncalves I.R."/>
            <person name="Martin J."/>
            <person name="Shivakumaraswamy S."/>
            <person name="Carrique L."/>
            <person name="Balaram H."/>
            <person name="Aghajari N."/>
        </authorList>
    </citation>
    <scope>X-RAY CRYSTALLOGRAPHY (2.80 ANGSTROMS) OF 2-555 OF MUTANT ALA-89 AND ALA-113</scope>
    <scope>DOMAIN</scope>
</reference>
<organism evidence="20">
    <name type="scientific">Plasmodium falciparum (isolate 3D7)</name>
    <dbReference type="NCBI Taxonomy" id="36329"/>
    <lineage>
        <taxon>Eukaryota</taxon>
        <taxon>Sar</taxon>
        <taxon>Alveolata</taxon>
        <taxon>Apicomplexa</taxon>
        <taxon>Aconoidasida</taxon>
        <taxon>Haemosporida</taxon>
        <taxon>Plasmodiidae</taxon>
        <taxon>Plasmodium</taxon>
        <taxon>Plasmodium (Laverania)</taxon>
    </lineage>
</organism>
<feature type="chain" id="PRO_0000457178" description="GMP synthase [glutamine-hydrolyzing]">
    <location>
        <begin position="1"/>
        <end position="555"/>
    </location>
</feature>
<feature type="domain" description="Glutamine amidotransferase type-1" evidence="1">
    <location>
        <begin position="8"/>
        <end position="234"/>
    </location>
</feature>
<feature type="domain" description="GMPS ATP-PPase" evidence="2">
    <location>
        <begin position="235"/>
        <end position="430"/>
    </location>
</feature>
<feature type="active site" description="Nucleophile; for GATase activity" evidence="1 15 16">
    <location>
        <position position="89"/>
    </location>
</feature>
<feature type="active site" description="For GATase activity" evidence="1">
    <location>
        <position position="208"/>
    </location>
</feature>
<feature type="active site" description="For GATase activity" evidence="1">
    <location>
        <position position="210"/>
    </location>
</feature>
<feature type="binding site" evidence="6 24">
    <location>
        <position position="93"/>
    </location>
    <ligand>
        <name>L-glutamine</name>
        <dbReference type="ChEBI" id="CHEBI:58359"/>
    </ligand>
</feature>
<feature type="binding site" evidence="6 24">
    <location>
        <position position="169"/>
    </location>
    <ligand>
        <name>L-glutamine</name>
        <dbReference type="ChEBI" id="CHEBI:58359"/>
    </ligand>
</feature>
<feature type="binding site" evidence="6 24">
    <location>
        <position position="172"/>
    </location>
    <ligand>
        <name>L-glutamine</name>
        <dbReference type="ChEBI" id="CHEBI:58359"/>
    </ligand>
</feature>
<feature type="binding site" evidence="6 24">
    <location>
        <position position="208"/>
    </location>
    <ligand>
        <name>L-glutamine</name>
        <dbReference type="ChEBI" id="CHEBI:58359"/>
    </ligand>
</feature>
<feature type="binding site" evidence="2">
    <location>
        <begin position="262"/>
        <end position="268"/>
    </location>
    <ligand>
        <name>ATP</name>
        <dbReference type="ChEBI" id="CHEBI:30616"/>
    </ligand>
</feature>
<feature type="binding site" evidence="9 21">
    <location>
        <position position="336"/>
    </location>
    <ligand>
        <name>XMP</name>
        <dbReference type="ChEBI" id="CHEBI:57464"/>
    </ligand>
</feature>
<feature type="binding site" evidence="9 21">
    <location>
        <position position="476"/>
    </location>
    <ligand>
        <name>XMP</name>
        <dbReference type="ChEBI" id="CHEBI:57464"/>
    </ligand>
</feature>
<feature type="binding site" evidence="9 21">
    <location>
        <position position="547"/>
    </location>
    <ligand>
        <name>XMP</name>
        <dbReference type="ChEBI" id="CHEBI:57464"/>
    </ligand>
</feature>
<feature type="binding site" evidence="9 21">
    <location>
        <position position="552"/>
    </location>
    <ligand>
        <name>XMP</name>
        <dbReference type="ChEBI" id="CHEBI:57464"/>
    </ligand>
</feature>
<feature type="binding site" evidence="9 21">
    <location>
        <position position="553"/>
    </location>
    <ligand>
        <name>XMP</name>
        <dbReference type="ChEBI" id="CHEBI:57464"/>
    </ligand>
</feature>
<feature type="site" description="Important for ATPPase activity" evidence="7">
    <location>
        <position position="371"/>
    </location>
</feature>
<feature type="site" description="Important for ATPPase activity" evidence="7">
    <location>
        <position position="388"/>
    </location>
</feature>
<feature type="site" description="Important for ATPPase activity" evidence="7">
    <location>
        <position position="389"/>
    </location>
</feature>
<feature type="mutagenesis site" description="Slight increase in affinity for glutamine. No defect in glutaminase activity." evidence="6">
    <original>Y</original>
    <variation>F</variation>
    <location>
        <position position="18"/>
    </location>
</feature>
<feature type="mutagenesis site" description="Slight decrease in affinity for glutamine. 1.8-fold increase in affinity for ATP. Slight increase in affinity for XMP. Moderate reduction in glutaminase activity." evidence="6">
    <original>H</original>
    <variation>A</variation>
    <location>
        <position position="20"/>
    </location>
</feature>
<feature type="mutagenesis site" description="50 percent decrease in glutaminase activity. 5.3-fold decrease in affinity for glutamine. 1.7-fold increase in affinity for ATP. 2.8-fold decrease in affinity for XMP." evidence="7">
    <original>K</original>
    <variation>L</variation>
    <location>
        <position position="24"/>
    </location>
</feature>
<feature type="mutagenesis site" description="No effect on glutaminase activity. 1.4-fold decrease in affinity for glutamine." evidence="7">
    <original>R</original>
    <variation>L</variation>
    <location>
        <position position="25"/>
    </location>
</feature>
<feature type="mutagenesis site" description="Loss of glutaminase activity, however, glutamine binding is not affected. In presence of exogenous ammonia, the amination of XMP to produce GMP is normal. 2.3-fold decrease in affinity for ATP and 1.8-fold decrease in affinity for XMP. 2.9-fold decrease in affinity for ATP and 1.9-fold decrease in affinity for XMP; when associated with A-113." evidence="5 6">
    <original>C</original>
    <variation>A</variation>
    <location>
        <position position="89"/>
    </location>
</feature>
<feature type="mutagenesis site" description="2.9-fold decrease in affinity for ATP and 1.9-fold decrease in affinity for XMP; when associated with A-89." evidence="6">
    <original>C</original>
    <variation>A</variation>
    <location>
        <position position="113"/>
    </location>
</feature>
<feature type="mutagenesis site" description="No effect on glutaminase activity. 1.2-fold decrease in affinity for ATP. 1.8-fold decrease in affinity for XMP." evidence="7">
    <original>K</original>
    <variation>L</variation>
    <location>
        <position position="160"/>
    </location>
</feature>
<feature type="mutagenesis site" description="Slight decrease in affinity for glutamine. Slight increase in glutaminase activity." evidence="6">
    <original>W</original>
    <variation>F</variation>
    <location>
        <position position="167"/>
    </location>
</feature>
<feature type="mutagenesis site" description="Slight increase in affinity for glutamine. No defect in glutaminase activity." evidence="6">
    <original>N</original>
    <variation>S</variation>
    <location>
        <position position="169"/>
    </location>
</feature>
<feature type="mutagenesis site" description="172-fold decrease in affinity for glutamine. Severe loss of glutaminase activity." evidence="6">
    <original>D</original>
    <variation>A</variation>
    <location>
        <position position="172"/>
    </location>
</feature>
<feature type="mutagenesis site" description="2.7-fold decrease in affinity for glutamine. No defect in glutaminase activity." evidence="6">
    <original>Y</original>
    <variation>W</variation>
    <location>
        <position position="212"/>
    </location>
</feature>
<feature type="mutagenesis site" description="40 percent decrease in glutaminase activity. 1.4-fold decrease in affinity for glutamine. 1.3-fold decrease in affinity for ATP. 1.8-fold decrease in affinity for XMP." evidence="7">
    <original>E</original>
    <variation>A</variation>
    <location>
        <position position="213"/>
    </location>
</feature>
<feature type="mutagenesis site" description="Impaired formation of adenyl-XMP intermediate. Slight increase in glutaminase activity." evidence="6">
    <original>D</original>
    <variation>A</variation>
    <location>
        <position position="371"/>
    </location>
</feature>
<feature type="mutagenesis site" description="8.9-fold decrease in affinity for ammonia. Severe loss of glutaminase activity." evidence="6">
    <original>E</original>
    <variation>L</variation>
    <location>
        <position position="374"/>
    </location>
</feature>
<feature type="mutagenesis site" description="20 percent decrease in glutaminase activity. 4.4-fold decrease in affinity for glutamine. 1.8-fold decrease in affinity for XMP." evidence="7">
    <original>K</original>
    <variation>L</variation>
    <location>
        <position position="376"/>
    </location>
</feature>
<feature type="mutagenesis site" description="Severe loss of ATP pyrophosphatase (ATPPase) activity. 80 percent decrease in glutaminase activity. Impaired GMP formation." evidence="7">
    <original>K</original>
    <variation>L</variation>
    <location>
        <position position="386"/>
    </location>
</feature>
<feature type="mutagenesis site" description="No effect on ATP pyrophosphatase (ATPPase) activity. 20 percent decrease in glutaminase activity. No effect on GMP formation." evidence="7">
    <original>T</original>
    <variation>A</variation>
    <location>
        <position position="387"/>
    </location>
</feature>
<feature type="mutagenesis site" description="Moderate decrease in ATP pyrophosphatase (ATPPase) activity. Reduces 49 percent decrease in glutaminase activity. Impaired GMP formation." evidence="7">
    <original>H</original>
    <variation>A</variation>
    <location>
        <position position="388"/>
    </location>
</feature>
<feature type="mutagenesis site" description="Loss of ATP pyrophosphatase (ATPPase) activity. 67 percent decrease in glutaminase activity. Impaired GMP formation." evidence="7">
    <original>H</original>
    <variation>A</variation>
    <location>
        <position position="389"/>
    </location>
</feature>
<feature type="mutagenesis site" description="No effect on ATP pyrophosphatase (ATPPase) activity. Increases glutaminase activity. Loss of GMP formation." evidence="7">
    <original>N</original>
    <variation>A</variation>
    <location>
        <position position="390"/>
    </location>
</feature>
<feature type="mutagenesis site" description="70 percent decrease in glutaminase activity. Loss of GMP formation." evidence="7">
    <original>K</original>
    <variation>L</variation>
    <location>
        <position position="411"/>
    </location>
</feature>
<feature type="mutagenesis site" description="30 percent decrease in glutaminase activity. 7.9-fold decrease in affinity for glutamine." evidence="7">
    <original>D</original>
    <variation>A</variation>
    <location>
        <position position="412"/>
    </location>
</feature>
<feature type="mutagenesis site" description="35 percent decrease in glutaminase activity. 3.6-fold decrease in affinity for glutamine." evidence="7">
    <original>D</original>
    <variation>A</variation>
    <location>
        <position position="413"/>
    </location>
</feature>
<feature type="mutagenesis site" description="Increases glutaminase activity. 4.2-fold decrease in affinity for ATP." evidence="7">
    <original>K</original>
    <variation>L</variation>
    <location>
        <position position="415"/>
    </location>
</feature>
<feature type="mutagenesis site" description="85 percent decrease in glutaminase activity." evidence="7">
    <original>R</original>
    <variation>L</variation>
    <location>
        <position position="539"/>
    </location>
</feature>
<feature type="mutagenesis site" description="85 percent decrease in glutaminase activity." evidence="7">
    <original>K</original>
    <variation>L</variation>
    <location>
        <position position="547"/>
    </location>
</feature>
<feature type="mutagenesis site" description="85 percent decrease in glutaminase activity." evidence="7">
    <original>E</original>
    <variation>L</variation>
    <location>
        <position position="553"/>
    </location>
</feature>
<feature type="mutagenesis site" description="20 percent decrease in glutaminase activity. No effect on GMP formation." evidence="7">
    <original>E</original>
    <variation>L</variation>
    <location>
        <position position="555"/>
    </location>
</feature>
<feature type="sequence conflict" description="In Ref. 1; AAF09184." evidence="13" ref="1">
    <original>N</original>
    <variation>H</variation>
    <location>
        <position position="28"/>
    </location>
</feature>
<feature type="strand" evidence="27">
    <location>
        <begin position="8"/>
        <end position="15"/>
    </location>
</feature>
<feature type="helix" evidence="27">
    <location>
        <begin position="19"/>
        <end position="28"/>
    </location>
</feature>
<feature type="strand" evidence="27">
    <location>
        <begin position="33"/>
        <end position="37"/>
    </location>
</feature>
<feature type="helix" evidence="27">
    <location>
        <begin position="42"/>
        <end position="45"/>
    </location>
</feature>
<feature type="strand" evidence="27">
    <location>
        <begin position="50"/>
        <end position="55"/>
    </location>
</feature>
<feature type="strand" evidence="28">
    <location>
        <begin position="62"/>
        <end position="64"/>
    </location>
</feature>
<feature type="helix" evidence="27">
    <location>
        <begin position="72"/>
        <end position="80"/>
    </location>
</feature>
<feature type="strand" evidence="27">
    <location>
        <begin position="85"/>
        <end position="88"/>
    </location>
</feature>
<feature type="helix" evidence="27">
    <location>
        <begin position="90"/>
        <end position="98"/>
    </location>
</feature>
<feature type="strand" evidence="27">
    <location>
        <begin position="102"/>
        <end position="118"/>
    </location>
</feature>
<feature type="helix" evidence="27">
    <location>
        <begin position="124"/>
        <end position="126"/>
    </location>
</feature>
<feature type="helix" evidence="27">
    <location>
        <begin position="130"/>
        <end position="132"/>
    </location>
</feature>
<feature type="turn" evidence="27">
    <location>
        <begin position="133"/>
        <end position="135"/>
    </location>
</feature>
<feature type="helix" evidence="27">
    <location>
        <begin position="139"/>
        <end position="142"/>
    </location>
</feature>
<feature type="helix" evidence="27">
    <location>
        <begin position="143"/>
        <end position="145"/>
    </location>
</feature>
<feature type="helix" evidence="27">
    <location>
        <begin position="154"/>
        <end position="156"/>
    </location>
</feature>
<feature type="strand" evidence="27">
    <location>
        <begin position="160"/>
        <end position="176"/>
    </location>
</feature>
<feature type="strand" evidence="27">
    <location>
        <begin position="182"/>
        <end position="187"/>
    </location>
</feature>
<feature type="strand" evidence="27">
    <location>
        <begin position="190"/>
        <end position="197"/>
    </location>
</feature>
<feature type="turn" evidence="27">
    <location>
        <begin position="198"/>
        <end position="201"/>
    </location>
</feature>
<feature type="strand" evidence="27">
    <location>
        <begin position="202"/>
        <end position="207"/>
    </location>
</feature>
<feature type="helix" evidence="27">
    <location>
        <begin position="217"/>
        <end position="226"/>
    </location>
</feature>
<feature type="helix" evidence="26">
    <location>
        <begin position="237"/>
        <end position="248"/>
    </location>
</feature>
<feature type="helix" evidence="26">
    <location>
        <begin position="249"/>
        <end position="251"/>
    </location>
</feature>
<feature type="turn" evidence="26">
    <location>
        <begin position="252"/>
        <end position="254"/>
    </location>
</feature>
<feature type="strand" evidence="26">
    <location>
        <begin position="256"/>
        <end position="260"/>
    </location>
</feature>
<feature type="helix" evidence="26">
    <location>
        <begin position="265"/>
        <end position="278"/>
    </location>
</feature>
<feature type="helix" evidence="26">
    <location>
        <begin position="279"/>
        <end position="281"/>
    </location>
</feature>
<feature type="strand" evidence="26">
    <location>
        <begin position="282"/>
        <end position="288"/>
    </location>
</feature>
<feature type="helix" evidence="26">
    <location>
        <begin position="296"/>
        <end position="307"/>
    </location>
</feature>
<feature type="strand" evidence="26">
    <location>
        <begin position="311"/>
        <end position="317"/>
    </location>
</feature>
<feature type="helix" evidence="26">
    <location>
        <begin position="319"/>
        <end position="325"/>
    </location>
</feature>
<feature type="turn" evidence="26">
    <location>
        <begin position="326"/>
        <end position="328"/>
    </location>
</feature>
<feature type="helix" evidence="26">
    <location>
        <begin position="332"/>
        <end position="352"/>
    </location>
</feature>
<feature type="helix" evidence="26">
    <location>
        <begin position="358"/>
        <end position="360"/>
    </location>
</feature>
<feature type="strand" evidence="26">
    <location>
        <begin position="361"/>
        <end position="364"/>
    </location>
</feature>
<feature type="helix" evidence="26">
    <location>
        <begin position="369"/>
        <end position="375"/>
    </location>
</feature>
<feature type="strand" evidence="26">
    <location>
        <begin position="401"/>
        <end position="403"/>
    </location>
</feature>
<feature type="turn" evidence="26">
    <location>
        <begin position="405"/>
        <end position="408"/>
    </location>
</feature>
<feature type="helix" evidence="26">
    <location>
        <begin position="411"/>
        <end position="419"/>
    </location>
</feature>
<feature type="turn" evidence="26">
    <location>
        <begin position="420"/>
        <end position="422"/>
    </location>
</feature>
<feature type="helix" evidence="26">
    <location>
        <begin position="425"/>
        <end position="429"/>
    </location>
</feature>
<feature type="turn" evidence="26">
    <location>
        <begin position="435"/>
        <end position="441"/>
    </location>
</feature>
<feature type="strand" evidence="28">
    <location>
        <begin position="442"/>
        <end position="444"/>
    </location>
</feature>
<feature type="helix" evidence="26">
    <location>
        <begin position="448"/>
        <end position="467"/>
    </location>
</feature>
<feature type="helix" evidence="26">
    <location>
        <begin position="471"/>
        <end position="473"/>
    </location>
</feature>
<feature type="strand" evidence="26">
    <location>
        <begin position="475"/>
        <end position="486"/>
    </location>
</feature>
<feature type="strand" evidence="26">
    <location>
        <begin position="497"/>
        <end position="511"/>
    </location>
</feature>
<feature type="strand" evidence="26">
    <location>
        <begin position="513"/>
        <end position="515"/>
    </location>
</feature>
<feature type="helix" evidence="26">
    <location>
        <begin position="520"/>
        <end position="533"/>
    </location>
</feature>
<feature type="strand" evidence="26">
    <location>
        <begin position="537"/>
        <end position="543"/>
    </location>
</feature>
<comment type="function">
    <text evidence="4 5 6 7">Catalyzes the conversion of xanthine monophosphate (XMP) to GMP in the presence of glutamine and ATP through an adenyl-XMP intermediate, which is the final step of de novo synthesis of GMP (PubMed:17868038, PubMed:21413787, PubMed:26592566, PubMed:32358899). The conversion of XMP to GMP involves the coordinated action of the glutamine amidotransferase (GATase) domain that catalyzes the hydrolysis of the amide side chain of glutamine producing ammonia and the ATP pyrophosphatase (ATPPase) domain that catalyzes the synthesis of adenyl-XMP intermediate from ATP (PubMed:17868038, PubMed:21413787, PubMed:26592566, PubMed:32358899). The ammonia produced by the GATase domain is tunnelled to the ATP-PPase domain where it attacks the adenyl-XMP intermediate generating GMP (PubMed:17868038, PubMed:21413787, PubMed:26592566, PubMed:32358899).</text>
</comment>
<comment type="catalytic activity">
    <reaction evidence="4 5 6 7">
        <text>XMP + L-glutamine + ATP + H2O = GMP + L-glutamate + AMP + diphosphate + 2 H(+)</text>
        <dbReference type="Rhea" id="RHEA:11680"/>
        <dbReference type="ChEBI" id="CHEBI:15377"/>
        <dbReference type="ChEBI" id="CHEBI:15378"/>
        <dbReference type="ChEBI" id="CHEBI:29985"/>
        <dbReference type="ChEBI" id="CHEBI:30616"/>
        <dbReference type="ChEBI" id="CHEBI:33019"/>
        <dbReference type="ChEBI" id="CHEBI:57464"/>
        <dbReference type="ChEBI" id="CHEBI:58115"/>
        <dbReference type="ChEBI" id="CHEBI:58359"/>
        <dbReference type="ChEBI" id="CHEBI:456215"/>
        <dbReference type="EC" id="6.3.5.2"/>
    </reaction>
    <physiologicalReaction direction="left-to-right" evidence="14 15 16 17">
        <dbReference type="Rhea" id="RHEA:11681"/>
    </physiologicalReaction>
</comment>
<comment type="cofactor">
    <cofactor evidence="4">
        <name>Mg(2+)</name>
        <dbReference type="ChEBI" id="CHEBI:18420"/>
    </cofactor>
</comment>
<comment type="activity regulation">
    <text evidence="4 7">The GATase domain is allosterically activated by the binding of substrates, ATP and XMP, to the ATPPase domain, thus ensuring that glutamine hydrolysis occurs only when the ATPPase domain is primed to receive ammonia (PubMed:17868038, PubMed:32358899). Inhibited by Na(+) (PubMed:17868038). Inhibited by the reaction product GMP (PubMed:17868038).</text>
</comment>
<comment type="biophysicochemical properties">
    <kinetics>
        <KM evidence="4">16.8 uM for XMP (at pH 8.5 and 25 degrees Celsius)</KM>
        <KM evidence="6">10 uM for XMP (at pH 8.5 and 25 degrees Celsius)</KM>
        <KM evidence="7">7.1 uM for XMP (at pH 8.5 and 25 degrees Celsius)</KM>
        <KM evidence="4">260 uM for ATP (at pH 8.5 and 25 degrees Celsius)</KM>
        <KM evidence="6">102 uM for ATP (at pH 8.5 and 25 degrees Celsius)</KM>
        <KM evidence="7">119 uM for ATP (at pH 8.5 and 25 degrees Celsius)</KM>
        <KM evidence="4">472 uM for glutamine (at pH 8.5 and 25 degrees Celsius)</KM>
        <KM evidence="6">360 uM for glutamine (at pH 8.5 and 25 degrees Celsius)</KM>
        <KM evidence="7">330 uM for glutamine (at pH 8.5 and 25 degrees Celsius)</KM>
        <Vmax evidence="4">450.0 nmol/min/mg enzyme (at pH 8.5 and 25 degrees Celsius)</Vmax>
        <text evidence="4 6 7">kcat is 0.43 sec(-1) for XMP as substrate (at pH 8.5 and 25 degrees Celsius) (PubMed:17868038). kcat is 44 min(-1) for XMP as substrate (at pH 8.5 and 25 degrees Celsius) (PubMed:26592566). kcat is 0.74 sec(-1) for XMP as substrate (at pH 8.5 and 25 degrees Celsius) (PubMed:32358899). kcat is 0.43 sec(-1) for ATP as substrate (at pH 8.5 and 25 degrees Celsius) (PubMed:17868038). kcat is 43 min(-1) for ATP as substrate (at pH 8.5 and 25 degrees Celsius) (PubMed:26592566). kcat is 0.89 sec(-1) for ATP as substrate (at pH 8.5 and 25 degrees Celsius) (PubMed:32358899). kcat is 0.43 sec(-1) for glutamine as substrate (at pH 8.5 and 25 degrees Celsius) (PubMed:17868038). kcat is 37 min(-1) for glutamine as substrate (at pH 8.5 and 25 degrees Celsius) (PubMed:26592566). kcat is 0.76 sec(-1) for glutamine as substrate (at pH 8.5 and 25 degrees Celsius) (PubMed:32358899).</text>
    </kinetics>
    <phDependence>
        <text evidence="5">Optimum pH is 7.4 with glutamine as substrate (PubMed:21413787). Optimum pH is 9.2 with NH4(+) as exogenous source of ammonia (PubMed:21413787).</text>
    </phDependence>
</comment>
<comment type="pathway">
    <text evidence="14 15 16 17">Purine metabolism; GMP biosynthesis; GMP from XMP (L-Gln route): step 1/1.</text>
</comment>
<comment type="subunit">
    <text evidence="4 6">Homodimer (via the GMPS ATP-PPase domain).</text>
</comment>
<comment type="developmental stage">
    <text evidence="3">Expressed during the asexual blood stage; expression is low in rings, increases during the trophozoite stage, peaks during the late trophozoites and decreases in schizonts.</text>
</comment>
<comment type="domain">
    <text evidence="4 5 6 7 8">The glutamine amidotransferase type-1 (GATase) domain hydrolyzes glutamine into glutamate and ammonia where ammonia is then use for the amination of adenyl-XMP intermediate (PubMed:17868038, PubMed:21413787, PubMed:32358899). Upon binding of glutamine, the GATase domain undergoes a conformational change involving an 85 degree rotation, which is required for channeling ammonia from the GATase domain to the GMPS ATP-PPase domain (PubMed:26592566, PubMed:35883427).</text>
</comment>
<comment type="domain">
    <text evidence="4 7">The GMPS ATP-PPase domain catalyzes the condensation of XMP with ATP to form the intermediate product XMP-AMP (PubMed:17868038, PubMed:32358899). ATP binds first, and its binding is required for the subsequent XMP binding (PubMed:17868038).</text>
</comment>
<comment type="miscellaneous">
    <text evidence="5 6">In absence of glutamine, can use exogenous ammonia to aminate adenyl-XMP intermediate to form GMP in vitro. However, this is likely not physiologically relevant as at cellular pH, ammonia is present as ammonium ion, which cannot serve as a nucleophile required for the reaction.</text>
</comment>
<comment type="sequence caution" evidence="13">
    <conflict type="frameshift">
        <sequence resource="EMBL-CDS" id="AAF09184"/>
    </conflict>
</comment>
<gene>
    <name evidence="11" type="primary">GMPS</name>
    <name evidence="13" type="ORF">PF10_0123</name>
    <name evidence="19" type="ORF">PF3D7_1012600</name>
</gene>
<proteinExistence type="evidence at protein level"/>
<protein>
    <recommendedName>
        <fullName evidence="10">GMP synthase [glutamine-hydrolyzing]</fullName>
        <shortName evidence="11">PfGMPS</shortName>
        <ecNumber evidence="4 5 6 7">6.3.5.2</ecNumber>
    </recommendedName>
    <alternativeName>
        <fullName evidence="13">Glutamine amidotransferase</fullName>
    </alternativeName>
    <alternativeName>
        <fullName evidence="12">Guanosine monophosphate synthetase</fullName>
    </alternativeName>
</protein>
<keyword id="KW-0002">3D-structure</keyword>
<keyword id="KW-0067">ATP-binding</keyword>
<keyword id="KW-0315">Glutamine amidotransferase</keyword>
<keyword id="KW-0332">GMP biosynthesis</keyword>
<keyword id="KW-0436">Ligase</keyword>
<keyword id="KW-0460">Magnesium</keyword>
<keyword id="KW-0479">Metal-binding</keyword>
<keyword id="KW-0547">Nucleotide-binding</keyword>
<keyword id="KW-0658">Purine biosynthesis</keyword>
<keyword id="KW-1185">Reference proteome</keyword>